<gene>
    <name evidence="1" type="primary">mnmG</name>
    <name evidence="1" type="synonym">gidA</name>
    <name type="ordered locus">H16_A3648</name>
</gene>
<proteinExistence type="inferred from homology"/>
<evidence type="ECO:0000255" key="1">
    <source>
        <dbReference type="HAMAP-Rule" id="MF_00129"/>
    </source>
</evidence>
<reference key="1">
    <citation type="journal article" date="2006" name="Nat. Biotechnol.">
        <title>Genome sequence of the bioplastic-producing 'Knallgas' bacterium Ralstonia eutropha H16.</title>
        <authorList>
            <person name="Pohlmann A."/>
            <person name="Fricke W.F."/>
            <person name="Reinecke F."/>
            <person name="Kusian B."/>
            <person name="Liesegang H."/>
            <person name="Cramm R."/>
            <person name="Eitinger T."/>
            <person name="Ewering C."/>
            <person name="Poetter M."/>
            <person name="Schwartz E."/>
            <person name="Strittmatter A."/>
            <person name="Voss I."/>
            <person name="Gottschalk G."/>
            <person name="Steinbuechel A."/>
            <person name="Friedrich B."/>
            <person name="Bowien B."/>
        </authorList>
    </citation>
    <scope>NUCLEOTIDE SEQUENCE [LARGE SCALE GENOMIC DNA]</scope>
    <source>
        <strain>ATCC 17699 / DSM 428 / KCTC 22496 / NCIMB 10442 / H16 / Stanier 337</strain>
    </source>
</reference>
<name>MNMG_CUPNH</name>
<protein>
    <recommendedName>
        <fullName evidence="1">tRNA uridine 5-carboxymethylaminomethyl modification enzyme MnmG</fullName>
    </recommendedName>
    <alternativeName>
        <fullName evidence="1">Glucose-inhibited division protein A</fullName>
    </alternativeName>
</protein>
<keyword id="KW-0963">Cytoplasm</keyword>
<keyword id="KW-0274">FAD</keyword>
<keyword id="KW-0285">Flavoprotein</keyword>
<keyword id="KW-0520">NAD</keyword>
<keyword id="KW-1185">Reference proteome</keyword>
<keyword id="KW-0819">tRNA processing</keyword>
<accession>Q0K5L6</accession>
<sequence length="652" mass="71500">MLYPKEFDVIVVGGGHAGTEAALAAARMGCQTLLLTHNIETLGQMSCNPSIGGIGKGHLVKEVDAMGGAMAAATDESGIQFRILNSSKGPAVRATRAQADRVLYRKAIRTRLENQPNLMLFQQAVDDLMVEGDRVVGAMTQVGIAFRARAVVLTAGTFLDGKIHVGLDNYTGGRAGDPAAVSLSARLKDLKLPQGRLKTGTPPRIDGRTIDFSVMEEQPGDLDPVPVFSFLGRPEQHPQQLPCWITHTNSRTHDIIRGGLDRSPMYTGVIEGVGPRYCPSIEDKIHRFATKESHQIFLEPEGLTTNEFYPNGISTSLPFDVQLELVHSIRGMENAHILRPGYAIEYDYFDPRGLKASLESKAISGLFFAGQINGTTGYEEAAAQGLLAGINAGCYVRERDAWTPRRDQAYLGVLVDDLITRGVTEPYRMFTSRAEFRLSLREDNADMRLTEVGRELGVVDDARWDAFNRKRDAVSRETERLKSTWVNPAMLPGEDAVPLLGKPIEREYSLADLLRRPEVRYEALMALQGGRHAPETPLDAEPMLAEQIREQIEIGIKYHGYIARQAAEVDKLEANESTRLPEGLDYTEVRGLGFEVSQKLNQHRPETLGQASRISGVTPAAISLLLVHLKKKGLGRTRAESGAPSGNSEEAA</sequence>
<comment type="function">
    <text evidence="1">NAD-binding protein involved in the addition of a carboxymethylaminomethyl (cmnm) group at the wobble position (U34) of certain tRNAs, forming tRNA-cmnm(5)s(2)U34.</text>
</comment>
<comment type="cofactor">
    <cofactor evidence="1">
        <name>FAD</name>
        <dbReference type="ChEBI" id="CHEBI:57692"/>
    </cofactor>
</comment>
<comment type="subunit">
    <text evidence="1">Homodimer. Heterotetramer of two MnmE and two MnmG subunits.</text>
</comment>
<comment type="subcellular location">
    <subcellularLocation>
        <location evidence="1">Cytoplasm</location>
    </subcellularLocation>
</comment>
<comment type="similarity">
    <text evidence="1">Belongs to the MnmG family.</text>
</comment>
<dbReference type="EMBL" id="AM260479">
    <property type="protein sequence ID" value="CAJ94705.1"/>
    <property type="molecule type" value="Genomic_DNA"/>
</dbReference>
<dbReference type="RefSeq" id="WP_010811274.1">
    <property type="nucleotide sequence ID" value="NZ_CP039287.1"/>
</dbReference>
<dbReference type="SMR" id="Q0K5L6"/>
<dbReference type="STRING" id="381666.H16_A3648"/>
<dbReference type="KEGG" id="reh:H16_A3648"/>
<dbReference type="eggNOG" id="COG0445">
    <property type="taxonomic scope" value="Bacteria"/>
</dbReference>
<dbReference type="HOGENOM" id="CLU_007831_2_2_4"/>
<dbReference type="OrthoDB" id="9815560at2"/>
<dbReference type="Proteomes" id="UP000008210">
    <property type="component" value="Chromosome 1"/>
</dbReference>
<dbReference type="GO" id="GO:0005829">
    <property type="term" value="C:cytosol"/>
    <property type="evidence" value="ECO:0007669"/>
    <property type="project" value="TreeGrafter"/>
</dbReference>
<dbReference type="GO" id="GO:0050660">
    <property type="term" value="F:flavin adenine dinucleotide binding"/>
    <property type="evidence" value="ECO:0007669"/>
    <property type="project" value="UniProtKB-UniRule"/>
</dbReference>
<dbReference type="GO" id="GO:0030488">
    <property type="term" value="P:tRNA methylation"/>
    <property type="evidence" value="ECO:0007669"/>
    <property type="project" value="TreeGrafter"/>
</dbReference>
<dbReference type="GO" id="GO:0002098">
    <property type="term" value="P:tRNA wobble uridine modification"/>
    <property type="evidence" value="ECO:0007669"/>
    <property type="project" value="InterPro"/>
</dbReference>
<dbReference type="FunFam" id="1.10.10.1800:FF:000001">
    <property type="entry name" value="tRNA uridine 5-carboxymethylaminomethyl modification enzyme MnmG"/>
    <property type="match status" value="1"/>
</dbReference>
<dbReference type="FunFam" id="1.10.150.570:FF:000001">
    <property type="entry name" value="tRNA uridine 5-carboxymethylaminomethyl modification enzyme MnmG"/>
    <property type="match status" value="1"/>
</dbReference>
<dbReference type="FunFam" id="3.50.50.60:FF:000002">
    <property type="entry name" value="tRNA uridine 5-carboxymethylaminomethyl modification enzyme MnmG"/>
    <property type="match status" value="1"/>
</dbReference>
<dbReference type="FunFam" id="3.50.50.60:FF:000010">
    <property type="entry name" value="tRNA uridine 5-carboxymethylaminomethyl modification enzyme MnmG"/>
    <property type="match status" value="1"/>
</dbReference>
<dbReference type="Gene3D" id="3.50.50.60">
    <property type="entry name" value="FAD/NAD(P)-binding domain"/>
    <property type="match status" value="2"/>
</dbReference>
<dbReference type="Gene3D" id="1.10.150.570">
    <property type="entry name" value="GidA associated domain, C-terminal subdomain"/>
    <property type="match status" value="1"/>
</dbReference>
<dbReference type="Gene3D" id="1.10.10.1800">
    <property type="entry name" value="tRNA uridine 5-carboxymethylaminomethyl modification enzyme MnmG/GidA"/>
    <property type="match status" value="1"/>
</dbReference>
<dbReference type="HAMAP" id="MF_00129">
    <property type="entry name" value="MnmG_GidA"/>
    <property type="match status" value="1"/>
</dbReference>
<dbReference type="InterPro" id="IPR036188">
    <property type="entry name" value="FAD/NAD-bd_sf"/>
</dbReference>
<dbReference type="InterPro" id="IPR049312">
    <property type="entry name" value="GIDA_C_N"/>
</dbReference>
<dbReference type="InterPro" id="IPR004416">
    <property type="entry name" value="MnmG"/>
</dbReference>
<dbReference type="InterPro" id="IPR002218">
    <property type="entry name" value="MnmG-rel"/>
</dbReference>
<dbReference type="InterPro" id="IPR020595">
    <property type="entry name" value="MnmG-rel_CS"/>
</dbReference>
<dbReference type="InterPro" id="IPR026904">
    <property type="entry name" value="MnmG_C"/>
</dbReference>
<dbReference type="InterPro" id="IPR047001">
    <property type="entry name" value="MnmG_C_subdom"/>
</dbReference>
<dbReference type="InterPro" id="IPR044920">
    <property type="entry name" value="MnmG_C_subdom_sf"/>
</dbReference>
<dbReference type="InterPro" id="IPR040131">
    <property type="entry name" value="MnmG_N"/>
</dbReference>
<dbReference type="NCBIfam" id="TIGR00136">
    <property type="entry name" value="mnmG_gidA"/>
    <property type="match status" value="1"/>
</dbReference>
<dbReference type="PANTHER" id="PTHR11806">
    <property type="entry name" value="GLUCOSE INHIBITED DIVISION PROTEIN A"/>
    <property type="match status" value="1"/>
</dbReference>
<dbReference type="PANTHER" id="PTHR11806:SF0">
    <property type="entry name" value="PROTEIN MTO1 HOMOLOG, MITOCHONDRIAL"/>
    <property type="match status" value="1"/>
</dbReference>
<dbReference type="Pfam" id="PF01134">
    <property type="entry name" value="GIDA"/>
    <property type="match status" value="1"/>
</dbReference>
<dbReference type="Pfam" id="PF21680">
    <property type="entry name" value="GIDA_C_1st"/>
    <property type="match status" value="1"/>
</dbReference>
<dbReference type="Pfam" id="PF13932">
    <property type="entry name" value="SAM_GIDA_C"/>
    <property type="match status" value="1"/>
</dbReference>
<dbReference type="SMART" id="SM01228">
    <property type="entry name" value="GIDA_assoc_3"/>
    <property type="match status" value="1"/>
</dbReference>
<dbReference type="SUPFAM" id="SSF51905">
    <property type="entry name" value="FAD/NAD(P)-binding domain"/>
    <property type="match status" value="1"/>
</dbReference>
<dbReference type="PROSITE" id="PS01280">
    <property type="entry name" value="GIDA_1"/>
    <property type="match status" value="1"/>
</dbReference>
<dbReference type="PROSITE" id="PS01281">
    <property type="entry name" value="GIDA_2"/>
    <property type="match status" value="1"/>
</dbReference>
<organism>
    <name type="scientific">Cupriavidus necator (strain ATCC 17699 / DSM 428 / KCTC 22496 / NCIMB 10442 / H16 / Stanier 337)</name>
    <name type="common">Ralstonia eutropha</name>
    <dbReference type="NCBI Taxonomy" id="381666"/>
    <lineage>
        <taxon>Bacteria</taxon>
        <taxon>Pseudomonadati</taxon>
        <taxon>Pseudomonadota</taxon>
        <taxon>Betaproteobacteria</taxon>
        <taxon>Burkholderiales</taxon>
        <taxon>Burkholderiaceae</taxon>
        <taxon>Cupriavidus</taxon>
    </lineage>
</organism>
<feature type="chain" id="PRO_1000016654" description="tRNA uridine 5-carboxymethylaminomethyl modification enzyme MnmG">
    <location>
        <begin position="1"/>
        <end position="652"/>
    </location>
</feature>
<feature type="binding site" evidence="1">
    <location>
        <begin position="13"/>
        <end position="18"/>
    </location>
    <ligand>
        <name>FAD</name>
        <dbReference type="ChEBI" id="CHEBI:57692"/>
    </ligand>
</feature>
<feature type="binding site" evidence="1">
    <location>
        <begin position="274"/>
        <end position="288"/>
    </location>
    <ligand>
        <name>NAD(+)</name>
        <dbReference type="ChEBI" id="CHEBI:57540"/>
    </ligand>
</feature>